<feature type="signal peptide" evidence="1">
    <location>
        <begin position="1"/>
        <end position="22"/>
    </location>
</feature>
<feature type="chain" id="PRO_0000045046" description="Interleukin-12 subunit beta">
    <location>
        <begin position="23"/>
        <end position="330"/>
    </location>
</feature>
<feature type="domain" description="Ig-like C2-type">
    <location>
        <begin position="23"/>
        <end position="106"/>
    </location>
</feature>
<feature type="domain" description="Fibronectin type-III" evidence="6">
    <location>
        <begin position="239"/>
        <end position="330"/>
    </location>
</feature>
<feature type="glycosylation site" description="N-linked (GlcNAc...) asparagine" evidence="4">
    <location>
        <position position="136"/>
    </location>
</feature>
<feature type="glycosylation site" description="N-linked (GlcNAc...) asparagine" evidence="4">
    <location>
        <position position="224"/>
    </location>
</feature>
<feature type="disulfide bond" evidence="5">
    <location>
        <begin position="50"/>
        <end position="90"/>
    </location>
</feature>
<feature type="disulfide bond" description="Interchain (with C-99 in IL12A and C-74 in IL23A)" evidence="2 5">
    <location>
        <position position="201"/>
    </location>
</feature>
<proteinExistence type="evidence at transcript level"/>
<dbReference type="EMBL" id="AB107654">
    <property type="protein sequence ID" value="BAC75391.1"/>
    <property type="molecule type" value="mRNA"/>
</dbReference>
<dbReference type="SMR" id="Q865W9"/>
<dbReference type="GlyCosmos" id="Q865W9">
    <property type="glycosylation" value="2 sites, No reported glycans"/>
</dbReference>
<dbReference type="GO" id="GO:0005615">
    <property type="term" value="C:extracellular space"/>
    <property type="evidence" value="ECO:0007669"/>
    <property type="project" value="UniProtKB-KW"/>
</dbReference>
<dbReference type="GO" id="GO:0016020">
    <property type="term" value="C:membrane"/>
    <property type="evidence" value="ECO:0007669"/>
    <property type="project" value="InterPro"/>
</dbReference>
<dbReference type="GO" id="GO:0005125">
    <property type="term" value="F:cytokine activity"/>
    <property type="evidence" value="ECO:0007669"/>
    <property type="project" value="UniProtKB-KW"/>
</dbReference>
<dbReference type="GO" id="GO:0004896">
    <property type="term" value="F:cytokine receptor activity"/>
    <property type="evidence" value="ECO:0007669"/>
    <property type="project" value="InterPro"/>
</dbReference>
<dbReference type="CDD" id="cd00063">
    <property type="entry name" value="FN3"/>
    <property type="match status" value="1"/>
</dbReference>
<dbReference type="FunFam" id="2.60.40.10:FF:000959">
    <property type="entry name" value="Interleukin-12 subunit beta"/>
    <property type="match status" value="1"/>
</dbReference>
<dbReference type="FunFam" id="2.60.40.10:FF:001008">
    <property type="entry name" value="Interleukin-12 subunit beta"/>
    <property type="match status" value="1"/>
</dbReference>
<dbReference type="FunFam" id="2.60.40.10:FF:001009">
    <property type="entry name" value="Interleukin-12 subunit beta"/>
    <property type="match status" value="1"/>
</dbReference>
<dbReference type="Gene3D" id="2.60.40.10">
    <property type="entry name" value="Immunoglobulins"/>
    <property type="match status" value="3"/>
</dbReference>
<dbReference type="InterPro" id="IPR003961">
    <property type="entry name" value="FN3_dom"/>
</dbReference>
<dbReference type="InterPro" id="IPR036116">
    <property type="entry name" value="FN3_sf"/>
</dbReference>
<dbReference type="InterPro" id="IPR003530">
    <property type="entry name" value="Hematopoietin_rcpt_L_F3_CS"/>
</dbReference>
<dbReference type="InterPro" id="IPR007110">
    <property type="entry name" value="Ig-like_dom"/>
</dbReference>
<dbReference type="InterPro" id="IPR036179">
    <property type="entry name" value="Ig-like_dom_sf"/>
</dbReference>
<dbReference type="InterPro" id="IPR013783">
    <property type="entry name" value="Ig-like_fold"/>
</dbReference>
<dbReference type="InterPro" id="IPR003598">
    <property type="entry name" value="Ig_sub2"/>
</dbReference>
<dbReference type="InterPro" id="IPR050676">
    <property type="entry name" value="IL-12"/>
</dbReference>
<dbReference type="InterPro" id="IPR015528">
    <property type="entry name" value="IL-12_beta"/>
</dbReference>
<dbReference type="InterPro" id="IPR019482">
    <property type="entry name" value="IL-12_beta_cen-dom"/>
</dbReference>
<dbReference type="PANTHER" id="PTHR48485:SF4">
    <property type="entry name" value="INTERLEUKIN-12 SUBUNIT BETA"/>
    <property type="match status" value="1"/>
</dbReference>
<dbReference type="PANTHER" id="PTHR48485">
    <property type="entry name" value="INTERLEUKIN-12 SUBUNIT BETA-RELATED"/>
    <property type="match status" value="1"/>
</dbReference>
<dbReference type="Pfam" id="PF10420">
    <property type="entry name" value="IL12p40_C"/>
    <property type="match status" value="1"/>
</dbReference>
<dbReference type="PIRSF" id="PIRSF038007">
    <property type="entry name" value="IL_12_beta"/>
    <property type="match status" value="1"/>
</dbReference>
<dbReference type="PRINTS" id="PR01928">
    <property type="entry name" value="INTRLEUKN12B"/>
</dbReference>
<dbReference type="SMART" id="SM00408">
    <property type="entry name" value="IGc2"/>
    <property type="match status" value="1"/>
</dbReference>
<dbReference type="SUPFAM" id="SSF49265">
    <property type="entry name" value="Fibronectin type III"/>
    <property type="match status" value="2"/>
</dbReference>
<dbReference type="SUPFAM" id="SSF48726">
    <property type="entry name" value="Immunoglobulin"/>
    <property type="match status" value="1"/>
</dbReference>
<dbReference type="PROSITE" id="PS50853">
    <property type="entry name" value="FN3"/>
    <property type="match status" value="1"/>
</dbReference>
<dbReference type="PROSITE" id="PS01354">
    <property type="entry name" value="HEMATOPO_REC_L_F3"/>
    <property type="match status" value="1"/>
</dbReference>
<dbReference type="PROSITE" id="PS50835">
    <property type="entry name" value="IG_LIKE"/>
    <property type="match status" value="1"/>
</dbReference>
<accession>Q865W9</accession>
<comment type="function">
    <text evidence="1">Cytokine that can act as a growth factor for activated T and NK cells, enhance the lytic activity of NK/lymphokine-activated killer cells, and stimulate the production of IFN-gamma by resting PBMC.</text>
</comment>
<comment type="function">
    <text evidence="1">Associates with IL23A to form the IL-23 interleukin, a heterodimeric cytokine which functions in innate and adaptive immunity. IL-23 may constitute with IL-17 an acute response to infection in peripheral tissues. IL-23 binds to a heterodimeric receptor complex composed of IL12RB1 and IL23R, activates the Jak-Stat signaling cascade, stimulates memory rather than naive T-cells and promotes production of pro-inflammatory cytokines. IL-23 induces autoimmune inflammation and thus may be responsible for autoimmune inflammatory diseases and may be important for tumorigenesis (By similarity).</text>
</comment>
<comment type="subunit">
    <text evidence="2 3">Heterodimer with IL12A; disulfide-linked. The heterodimer is known as interleukin IL-12. Heterodimer with IL23A; disulfide-linked. The heterodimer is known as interleukin IL-23. Also secreted as a monomer. Interacts with NBR1; this interaction promotes IL-12 secretion (By similarity).</text>
</comment>
<comment type="subcellular location">
    <subcellularLocation>
        <location>Secreted</location>
    </subcellularLocation>
</comment>
<comment type="similarity">
    <text evidence="7">Belongs to the IL-12B family.</text>
</comment>
<reference key="1">
    <citation type="journal article" date="2004" name="Vet. Immunol. Immunopathol.">
        <title>Cloning and sequence analysis of llama cytokines related to cell-mediated immunity.</title>
        <authorList>
            <person name="Odbileg R."/>
            <person name="Lee S.-I."/>
            <person name="Yoshida R."/>
            <person name="Chang K.-S."/>
            <person name="Ohashi K."/>
            <person name="Sugimoto C."/>
            <person name="Onuma M."/>
        </authorList>
    </citation>
    <scope>NUCLEOTIDE SEQUENCE [MRNA]</scope>
</reference>
<evidence type="ECO:0000250" key="1"/>
<evidence type="ECO:0000250" key="2">
    <source>
        <dbReference type="UniProtKB" id="P29460"/>
    </source>
</evidence>
<evidence type="ECO:0000250" key="3">
    <source>
        <dbReference type="UniProtKB" id="P43432"/>
    </source>
</evidence>
<evidence type="ECO:0000255" key="4"/>
<evidence type="ECO:0000255" key="5">
    <source>
        <dbReference type="PROSITE-ProRule" id="PRU00114"/>
    </source>
</evidence>
<evidence type="ECO:0000255" key="6">
    <source>
        <dbReference type="PROSITE-ProRule" id="PRU00316"/>
    </source>
</evidence>
<evidence type="ECO:0000305" key="7"/>
<organism>
    <name type="scientific">Lama glama</name>
    <name type="common">Llama</name>
    <dbReference type="NCBI Taxonomy" id="9844"/>
    <lineage>
        <taxon>Eukaryota</taxon>
        <taxon>Metazoa</taxon>
        <taxon>Chordata</taxon>
        <taxon>Craniata</taxon>
        <taxon>Vertebrata</taxon>
        <taxon>Euteleostomi</taxon>
        <taxon>Mammalia</taxon>
        <taxon>Eutheria</taxon>
        <taxon>Laurasiatheria</taxon>
        <taxon>Artiodactyla</taxon>
        <taxon>Tylopoda</taxon>
        <taxon>Camelidae</taxon>
        <taxon>Lama</taxon>
    </lineage>
</organism>
<name>IL12B_LAMGL</name>
<sequence>MHPQQLVVSWFSLVLLASPIMAIWELEKNVYVVELDWYPDAPGETVVLTCDTPEEDGITWTSDHSSEVLGSGKTLTIQVKEFGDAGQYTCHKGGEVLSHSLLLLHKKEDGVWSTDILKKDQKEPKSKTFLKCEAKNYSGHFTCWWLTAVSTDLKFSVKSSRGSSDPRGVTCGAATLSAERVGVEHRDSWKYTVECQEGSSCPAAEESLPIELVVEAVHKLKYENYSSSFFIRDIIRPDPPKNLQLKPLKNSRHVEVSWEYPDTWSTPHSYFSLTFCVQVQGKHKREKKDKLFVDQTSAKVTCPKDASIRVQARDRYYSSSWSEWASVSCS</sequence>
<gene>
    <name type="primary">IL12B</name>
</gene>
<protein>
    <recommendedName>
        <fullName>Interleukin-12 subunit beta</fullName>
        <shortName>IL-12B</shortName>
    </recommendedName>
    <alternativeName>
        <fullName>Cytotoxic lymphocyte maturation factor 40 kDa subunit</fullName>
        <shortName>CLMF p40</shortName>
    </alternativeName>
    <alternativeName>
        <fullName>IL-12 subunit p40</fullName>
    </alternativeName>
</protein>
<keyword id="KW-0202">Cytokine</keyword>
<keyword id="KW-1015">Disulfide bond</keyword>
<keyword id="KW-0325">Glycoprotein</keyword>
<keyword id="KW-0393">Immunoglobulin domain</keyword>
<keyword id="KW-0964">Secreted</keyword>
<keyword id="KW-0732">Signal</keyword>